<name>GCH1_METS4</name>
<sequence>MDAVLKSLSVRLPDAADKRSDTGRPERVTERPTRQEAEAAVRTLIRWAGDDPEREGLRETPQRVARAYEQIFGGYRQEPTHILDRVFEEVEGYGDIVLVRDIPFHSHCEHHMVPFIGRAHIAYYPRRGVVGLSKLARVVDAFARRLQTQETMTAQIADTIDAVLNPRGVAVMVEAEHLCMAMRGVQKAGVSTLTTQFTGVFKQDPHEQVRFLTLVRDQR</sequence>
<protein>
    <recommendedName>
        <fullName evidence="1">GTP cyclohydrolase 1</fullName>
        <ecNumber evidence="1">3.5.4.16</ecNumber>
    </recommendedName>
    <alternativeName>
        <fullName evidence="1">GTP cyclohydrolase I</fullName>
        <shortName evidence="1">GTP-CH-I</shortName>
    </alternativeName>
</protein>
<organism>
    <name type="scientific">Methylobacterium sp. (strain 4-46)</name>
    <dbReference type="NCBI Taxonomy" id="426117"/>
    <lineage>
        <taxon>Bacteria</taxon>
        <taxon>Pseudomonadati</taxon>
        <taxon>Pseudomonadota</taxon>
        <taxon>Alphaproteobacteria</taxon>
        <taxon>Hyphomicrobiales</taxon>
        <taxon>Methylobacteriaceae</taxon>
        <taxon>Methylobacterium</taxon>
    </lineage>
</organism>
<accession>B0U881</accession>
<keyword id="KW-0342">GTP-binding</keyword>
<keyword id="KW-0378">Hydrolase</keyword>
<keyword id="KW-0479">Metal-binding</keyword>
<keyword id="KW-0547">Nucleotide-binding</keyword>
<keyword id="KW-0554">One-carbon metabolism</keyword>
<keyword id="KW-0862">Zinc</keyword>
<comment type="catalytic activity">
    <reaction evidence="1">
        <text>GTP + H2O = 7,8-dihydroneopterin 3'-triphosphate + formate + H(+)</text>
        <dbReference type="Rhea" id="RHEA:17473"/>
        <dbReference type="ChEBI" id="CHEBI:15377"/>
        <dbReference type="ChEBI" id="CHEBI:15378"/>
        <dbReference type="ChEBI" id="CHEBI:15740"/>
        <dbReference type="ChEBI" id="CHEBI:37565"/>
        <dbReference type="ChEBI" id="CHEBI:58462"/>
        <dbReference type="EC" id="3.5.4.16"/>
    </reaction>
</comment>
<comment type="pathway">
    <text evidence="1">Cofactor biosynthesis; 7,8-dihydroneopterin triphosphate biosynthesis; 7,8-dihydroneopterin triphosphate from GTP: step 1/1.</text>
</comment>
<comment type="subunit">
    <text evidence="1">Homomer.</text>
</comment>
<comment type="similarity">
    <text evidence="1">Belongs to the GTP cyclohydrolase I family.</text>
</comment>
<dbReference type="EC" id="3.5.4.16" evidence="1"/>
<dbReference type="EMBL" id="CP000943">
    <property type="protein sequence ID" value="ACA20585.1"/>
    <property type="molecule type" value="Genomic_DNA"/>
</dbReference>
<dbReference type="RefSeq" id="WP_012335963.1">
    <property type="nucleotide sequence ID" value="NC_010511.1"/>
</dbReference>
<dbReference type="SMR" id="B0U881"/>
<dbReference type="STRING" id="426117.M446_6320"/>
<dbReference type="KEGG" id="met:M446_6320"/>
<dbReference type="eggNOG" id="COG0302">
    <property type="taxonomic scope" value="Bacteria"/>
</dbReference>
<dbReference type="HOGENOM" id="CLU_049768_3_1_5"/>
<dbReference type="UniPathway" id="UPA00848">
    <property type="reaction ID" value="UER00151"/>
</dbReference>
<dbReference type="GO" id="GO:0005737">
    <property type="term" value="C:cytoplasm"/>
    <property type="evidence" value="ECO:0007669"/>
    <property type="project" value="TreeGrafter"/>
</dbReference>
<dbReference type="GO" id="GO:0005525">
    <property type="term" value="F:GTP binding"/>
    <property type="evidence" value="ECO:0007669"/>
    <property type="project" value="UniProtKB-KW"/>
</dbReference>
<dbReference type="GO" id="GO:0003934">
    <property type="term" value="F:GTP cyclohydrolase I activity"/>
    <property type="evidence" value="ECO:0007669"/>
    <property type="project" value="UniProtKB-UniRule"/>
</dbReference>
<dbReference type="GO" id="GO:0008270">
    <property type="term" value="F:zinc ion binding"/>
    <property type="evidence" value="ECO:0007669"/>
    <property type="project" value="UniProtKB-UniRule"/>
</dbReference>
<dbReference type="GO" id="GO:0006730">
    <property type="term" value="P:one-carbon metabolic process"/>
    <property type="evidence" value="ECO:0007669"/>
    <property type="project" value="UniProtKB-UniRule"/>
</dbReference>
<dbReference type="GO" id="GO:0006729">
    <property type="term" value="P:tetrahydrobiopterin biosynthetic process"/>
    <property type="evidence" value="ECO:0007669"/>
    <property type="project" value="TreeGrafter"/>
</dbReference>
<dbReference type="GO" id="GO:0046654">
    <property type="term" value="P:tetrahydrofolate biosynthetic process"/>
    <property type="evidence" value="ECO:0007669"/>
    <property type="project" value="UniProtKB-UniRule"/>
</dbReference>
<dbReference type="FunFam" id="1.10.286.10:FF:000001">
    <property type="entry name" value="GTP cyclohydrolase 1"/>
    <property type="match status" value="1"/>
</dbReference>
<dbReference type="FunFam" id="3.30.1130.10:FF:000001">
    <property type="entry name" value="GTP cyclohydrolase 1"/>
    <property type="match status" value="1"/>
</dbReference>
<dbReference type="Gene3D" id="1.10.286.10">
    <property type="match status" value="1"/>
</dbReference>
<dbReference type="Gene3D" id="3.30.1130.10">
    <property type="match status" value="1"/>
</dbReference>
<dbReference type="HAMAP" id="MF_00223">
    <property type="entry name" value="FolE"/>
    <property type="match status" value="1"/>
</dbReference>
<dbReference type="InterPro" id="IPR043133">
    <property type="entry name" value="GTP-CH-I_C/QueF"/>
</dbReference>
<dbReference type="InterPro" id="IPR043134">
    <property type="entry name" value="GTP-CH-I_N"/>
</dbReference>
<dbReference type="InterPro" id="IPR001474">
    <property type="entry name" value="GTP_CycHdrlase_I"/>
</dbReference>
<dbReference type="InterPro" id="IPR018234">
    <property type="entry name" value="GTP_CycHdrlase_I_CS"/>
</dbReference>
<dbReference type="InterPro" id="IPR020602">
    <property type="entry name" value="GTP_CycHdrlase_I_dom"/>
</dbReference>
<dbReference type="NCBIfam" id="TIGR00063">
    <property type="entry name" value="folE"/>
    <property type="match status" value="1"/>
</dbReference>
<dbReference type="NCBIfam" id="NF006825">
    <property type="entry name" value="PRK09347.1-2"/>
    <property type="match status" value="1"/>
</dbReference>
<dbReference type="NCBIfam" id="NF006826">
    <property type="entry name" value="PRK09347.1-3"/>
    <property type="match status" value="1"/>
</dbReference>
<dbReference type="PANTHER" id="PTHR11109:SF7">
    <property type="entry name" value="GTP CYCLOHYDROLASE 1"/>
    <property type="match status" value="1"/>
</dbReference>
<dbReference type="PANTHER" id="PTHR11109">
    <property type="entry name" value="GTP CYCLOHYDROLASE I"/>
    <property type="match status" value="1"/>
</dbReference>
<dbReference type="Pfam" id="PF01227">
    <property type="entry name" value="GTP_cyclohydroI"/>
    <property type="match status" value="1"/>
</dbReference>
<dbReference type="SUPFAM" id="SSF55620">
    <property type="entry name" value="Tetrahydrobiopterin biosynthesis enzymes-like"/>
    <property type="match status" value="1"/>
</dbReference>
<dbReference type="PROSITE" id="PS00859">
    <property type="entry name" value="GTP_CYCLOHYDROL_1_1"/>
    <property type="match status" value="1"/>
</dbReference>
<feature type="chain" id="PRO_1000100183" description="GTP cyclohydrolase 1">
    <location>
        <begin position="1"/>
        <end position="219"/>
    </location>
</feature>
<feature type="region of interest" description="Disordered" evidence="2">
    <location>
        <begin position="1"/>
        <end position="37"/>
    </location>
</feature>
<feature type="compositionally biased region" description="Basic and acidic residues" evidence="2">
    <location>
        <begin position="14"/>
        <end position="37"/>
    </location>
</feature>
<feature type="binding site" evidence="1">
    <location>
        <position position="108"/>
    </location>
    <ligand>
        <name>Zn(2+)</name>
        <dbReference type="ChEBI" id="CHEBI:29105"/>
    </ligand>
</feature>
<feature type="binding site" evidence="1">
    <location>
        <position position="111"/>
    </location>
    <ligand>
        <name>Zn(2+)</name>
        <dbReference type="ChEBI" id="CHEBI:29105"/>
    </ligand>
</feature>
<feature type="binding site" evidence="1">
    <location>
        <position position="179"/>
    </location>
    <ligand>
        <name>Zn(2+)</name>
        <dbReference type="ChEBI" id="CHEBI:29105"/>
    </ligand>
</feature>
<evidence type="ECO:0000255" key="1">
    <source>
        <dbReference type="HAMAP-Rule" id="MF_00223"/>
    </source>
</evidence>
<evidence type="ECO:0000256" key="2">
    <source>
        <dbReference type="SAM" id="MobiDB-lite"/>
    </source>
</evidence>
<proteinExistence type="inferred from homology"/>
<reference key="1">
    <citation type="submission" date="2008-02" db="EMBL/GenBank/DDBJ databases">
        <title>Complete sequence of chromosome of Methylobacterium sp. 4-46.</title>
        <authorList>
            <consortium name="US DOE Joint Genome Institute"/>
            <person name="Copeland A."/>
            <person name="Lucas S."/>
            <person name="Lapidus A."/>
            <person name="Glavina del Rio T."/>
            <person name="Dalin E."/>
            <person name="Tice H."/>
            <person name="Bruce D."/>
            <person name="Goodwin L."/>
            <person name="Pitluck S."/>
            <person name="Chertkov O."/>
            <person name="Brettin T."/>
            <person name="Detter J.C."/>
            <person name="Han C."/>
            <person name="Kuske C.R."/>
            <person name="Schmutz J."/>
            <person name="Larimer F."/>
            <person name="Land M."/>
            <person name="Hauser L."/>
            <person name="Kyrpides N."/>
            <person name="Ivanova N."/>
            <person name="Marx C.J."/>
            <person name="Richardson P."/>
        </authorList>
    </citation>
    <scope>NUCLEOTIDE SEQUENCE [LARGE SCALE GENOMIC DNA]</scope>
    <source>
        <strain>4-46</strain>
    </source>
</reference>
<gene>
    <name evidence="1" type="primary">folE</name>
    <name type="ordered locus">M446_6320</name>
</gene>